<evidence type="ECO:0000250" key="1"/>
<evidence type="ECO:0000250" key="2">
    <source>
        <dbReference type="UniProtKB" id="Q12441"/>
    </source>
</evidence>
<evidence type="ECO:0000256" key="3">
    <source>
        <dbReference type="SAM" id="MobiDB-lite"/>
    </source>
</evidence>
<evidence type="ECO:0000269" key="4">
    <source>
    </source>
</evidence>
<protein>
    <recommendedName>
        <fullName>Transposon Ty1-ER2 Gag polyprotein</fullName>
    </recommendedName>
    <alternativeName>
        <fullName>Gag-p49</fullName>
    </alternativeName>
    <alternativeName>
        <fullName>Transposon Ty1 protein A</fullName>
        <shortName>TY1A</shortName>
        <shortName>TYA</shortName>
    </alternativeName>
    <alternativeName>
        <fullName>p58</fullName>
    </alternativeName>
    <component>
        <recommendedName>
            <fullName>Capsid protein</fullName>
            <shortName>CA</shortName>
        </recommendedName>
        <alternativeName>
            <fullName>Gag-p45</fullName>
        </alternativeName>
        <alternativeName>
            <fullName>p54</fullName>
        </alternativeName>
    </component>
    <component>
        <recommendedName>
            <fullName>Gag-p4</fullName>
        </recommendedName>
    </component>
</protein>
<feature type="chain" id="PRO_0000409779" description="Transposon Ty1-ER2 Gag polyprotein">
    <location>
        <begin position="1"/>
        <end position="440"/>
    </location>
</feature>
<feature type="chain" id="PRO_0000409780" description="Capsid protein" evidence="1">
    <location>
        <begin position="1"/>
        <end position="401"/>
    </location>
</feature>
<feature type="peptide" id="PRO_0000409781" description="Gag-p4" evidence="1">
    <location>
        <begin position="402"/>
        <end position="440"/>
    </location>
</feature>
<feature type="region of interest" description="Disordered" evidence="3">
    <location>
        <begin position="1"/>
        <end position="93"/>
    </location>
</feature>
<feature type="region of interest" description="Disordered" evidence="3">
    <location>
        <begin position="126"/>
        <end position="173"/>
    </location>
</feature>
<feature type="region of interest" description="RNA-binding" evidence="1">
    <location>
        <begin position="299"/>
        <end position="401"/>
    </location>
</feature>
<feature type="region of interest" description="Disordered" evidence="3">
    <location>
        <begin position="352"/>
        <end position="440"/>
    </location>
</feature>
<feature type="compositionally biased region" description="Polar residues" evidence="3">
    <location>
        <begin position="1"/>
        <end position="10"/>
    </location>
</feature>
<feature type="compositionally biased region" description="Polar residues" evidence="3">
    <location>
        <begin position="48"/>
        <end position="60"/>
    </location>
</feature>
<feature type="compositionally biased region" description="Polar residues" evidence="3">
    <location>
        <begin position="127"/>
        <end position="152"/>
    </location>
</feature>
<feature type="compositionally biased region" description="Low complexity" evidence="3">
    <location>
        <begin position="153"/>
        <end position="165"/>
    </location>
</feature>
<feature type="compositionally biased region" description="Low complexity" evidence="3">
    <location>
        <begin position="402"/>
        <end position="418"/>
    </location>
</feature>
<feature type="compositionally biased region" description="Polar residues" evidence="3">
    <location>
        <begin position="419"/>
        <end position="428"/>
    </location>
</feature>
<feature type="compositionally biased region" description="Basic and acidic residues" evidence="3">
    <location>
        <begin position="429"/>
        <end position="440"/>
    </location>
</feature>
<feature type="site" description="Cleavage; by Ty1 protease" evidence="1">
    <location>
        <begin position="401"/>
        <end position="402"/>
    </location>
</feature>
<feature type="modified residue" description="Phosphoserine" evidence="2">
    <location>
        <position position="416"/>
    </location>
</feature>
<reference key="1">
    <citation type="journal article" date="1997" name="Nature">
        <title>The nucleotide sequence of Saccharomyces cerevisiae chromosome V.</title>
        <authorList>
            <person name="Dietrich F.S."/>
            <person name="Mulligan J.T."/>
            <person name="Hennessy K.M."/>
            <person name="Yelton M.A."/>
            <person name="Allen E."/>
            <person name="Araujo R."/>
            <person name="Aviles E."/>
            <person name="Berno A."/>
            <person name="Brennan T."/>
            <person name="Carpenter J."/>
            <person name="Chen E."/>
            <person name="Cherry J.M."/>
            <person name="Chung E."/>
            <person name="Duncan M."/>
            <person name="Guzman E."/>
            <person name="Hartzell G."/>
            <person name="Hunicke-Smith S."/>
            <person name="Hyman R.W."/>
            <person name="Kayser A."/>
            <person name="Komp C."/>
            <person name="Lashkari D."/>
            <person name="Lew H."/>
            <person name="Lin D."/>
            <person name="Mosedale D."/>
            <person name="Nakahara K."/>
            <person name="Namath A."/>
            <person name="Norgren R."/>
            <person name="Oefner P."/>
            <person name="Oh C."/>
            <person name="Petel F.X."/>
            <person name="Roberts D."/>
            <person name="Sehl P."/>
            <person name="Schramm S."/>
            <person name="Shogren T."/>
            <person name="Smith V."/>
            <person name="Taylor P."/>
            <person name="Wei Y."/>
            <person name="Botstein D."/>
            <person name="Davis R.W."/>
        </authorList>
    </citation>
    <scope>NUCLEOTIDE SEQUENCE [LARGE SCALE GENOMIC DNA]</scope>
    <source>
        <strain>ATCC 204508 / S288c</strain>
    </source>
</reference>
<reference key="2">
    <citation type="journal article" date="2014" name="G3 (Bethesda)">
        <title>The reference genome sequence of Saccharomyces cerevisiae: Then and now.</title>
        <authorList>
            <person name="Engel S.R."/>
            <person name="Dietrich F.S."/>
            <person name="Fisk D.G."/>
            <person name="Binkley G."/>
            <person name="Balakrishnan R."/>
            <person name="Costanzo M.C."/>
            <person name="Dwight S.S."/>
            <person name="Hitz B.C."/>
            <person name="Karra K."/>
            <person name="Nash R.S."/>
            <person name="Weng S."/>
            <person name="Wong E.D."/>
            <person name="Lloyd P."/>
            <person name="Skrzypek M.S."/>
            <person name="Miyasato S.R."/>
            <person name="Simison M."/>
            <person name="Cherry J.M."/>
        </authorList>
    </citation>
    <scope>GENOME REANNOTATION</scope>
    <source>
        <strain>ATCC 204508 / S288c</strain>
    </source>
</reference>
<reference key="3">
    <citation type="journal article" date="1998" name="Genome Res.">
        <title>Transposable elements and genome organization: a comprehensive survey of retrotransposons revealed by the complete Saccharomyces cerevisiae genome sequence.</title>
        <authorList>
            <person name="Kim J.M."/>
            <person name="Vanguri S."/>
            <person name="Boeke J.D."/>
            <person name="Gabriel A."/>
            <person name="Voytas D.F."/>
        </authorList>
    </citation>
    <scope>NOMENCLATURE</scope>
</reference>
<reference key="4">
    <citation type="journal article" date="2002" name="Mol. Cell. Biol.">
        <title>Differential effects of chromatin and Gcn4 on the 50-fold range of expression among individual yeast Ty1 retrotransposons.</title>
        <authorList>
            <person name="Morillon A."/>
            <person name="Benard L."/>
            <person name="Springer M."/>
            <person name="Lesage P."/>
        </authorList>
    </citation>
    <scope>INDUCTION</scope>
</reference>
<reference key="5">
    <citation type="journal article" date="2005" name="Cytogenet. Genome Res.">
        <title>Happy together: the life and times of Ty retrotransposons and their hosts.</title>
        <authorList>
            <person name="Lesage P."/>
            <person name="Todeschini A.L."/>
        </authorList>
    </citation>
    <scope>REVIEW</scope>
</reference>
<proteinExistence type="evidence at transcript level"/>
<comment type="function">
    <text evidence="1">Capsid protein (CA) is the structural component of the virus-like particle (VLP), forming the shell that encapsulates the retrotransposons dimeric RNA genome. The particles are assembled from trimer-clustered units and there are holes in the capsid shells that allow for the diffusion of macromolecules. CA also has nucleocapsid-like chaperone activity, promoting primer tRNA(i)-Met annealing to the multipartite primer-binding site (PBS), dimerization of Ty1 RNA and initiation of reverse transcription (By similarity).</text>
</comment>
<comment type="subunit">
    <text evidence="1">Homotrimer.</text>
</comment>
<comment type="subcellular location">
    <subcellularLocation>
        <location evidence="1">Cytoplasm</location>
    </subcellularLocation>
</comment>
<comment type="alternative products">
    <event type="ribosomal frameshifting"/>
    <isoform>
        <id>P0CX66-1</id>
        <name>Transposon Ty1-ER2 Gag polyprotein</name>
        <sequence type="displayed"/>
    </isoform>
    <isoform>
        <id>Q03619-1</id>
        <name>Transposon Ty1-ER2 Gag-Pol polyprotein</name>
        <sequence type="external"/>
    </isoform>
    <text evidence="1">The Gag-Pol polyprotein is generated by a +1 ribosomal frameshift between the codons for Leu-435 and Gly-436. The ratio of Gag:Gag-Pol varies between 20:1 and 5:1 (By similarity).</text>
</comment>
<comment type="induction">
    <text evidence="4">Ty1-ER2 is a weakly expressed element. Induced under amino acid starvation conditions by GCN4.</text>
</comment>
<comment type="domain">
    <text evidence="1">The C-terminal RNA-binding region of CA is sufficient for all its nucleocapsid-like chaperone activities.</text>
</comment>
<comment type="miscellaneous">
    <text>Retrotransposons are mobile genetic entities that are able to replicate via an RNA intermediate and a reverse transcription step. In contrast to retroviruses, retrotransposons are non-infectious, lack an envelope and remain intracellular. Ty1 retrotransposons belong to the copia elements (pseudoviridae).</text>
</comment>
<comment type="miscellaneous">
    <molecule>Isoform Transposon Ty1-ER2 Gag polyprotein</molecule>
    <text>Produced by conventional translation.</text>
</comment>
<dbReference type="EMBL" id="U18917">
    <property type="status" value="NOT_ANNOTATED_CDS"/>
    <property type="molecule type" value="Genomic_DNA"/>
</dbReference>
<dbReference type="EMBL" id="BK006939">
    <property type="protein sequence ID" value="DAA07822.1"/>
    <property type="molecule type" value="Genomic_DNA"/>
</dbReference>
<dbReference type="PIR" id="S53588">
    <property type="entry name" value="S53588"/>
</dbReference>
<dbReference type="RefSeq" id="NP_013766.1">
    <molecule id="P0CX66-1"/>
    <property type="nucleotide sequence ID" value="NM_001182548.1"/>
</dbReference>
<dbReference type="RefSeq" id="NP_058151.1">
    <molecule id="P0CX66-1"/>
    <property type="nucleotide sequence ID" value="NM_001184424.1"/>
</dbReference>
<dbReference type="RefSeq" id="NP_058156.1">
    <molecule id="P0CX66-1"/>
    <property type="nucleotide sequence ID" value="NM_001184429.1"/>
</dbReference>
<dbReference type="RefSeq" id="NP_058166.1">
    <molecule id="P0CX66-1"/>
    <property type="nucleotide sequence ID" value="NM_001184399.1"/>
</dbReference>
<dbReference type="SMR" id="P0CX66"/>
<dbReference type="BioGRID" id="32371">
    <property type="interactions" value="2"/>
</dbReference>
<dbReference type="BioGRID" id="33412">
    <property type="interactions" value="5"/>
</dbReference>
<dbReference type="BioGRID" id="35226">
    <property type="interactions" value="5"/>
</dbReference>
<dbReference type="BioGRID" id="36913">
    <property type="interactions" value="2"/>
</dbReference>
<dbReference type="FunCoup" id="P0CX66">
    <property type="interactions" value="58"/>
</dbReference>
<dbReference type="IntAct" id="P0CX66">
    <property type="interactions" value="1"/>
</dbReference>
<dbReference type="MINT" id="P0CX66"/>
<dbReference type="GlyGen" id="P0CX66">
    <property type="glycosylation" value="2 sites"/>
</dbReference>
<dbReference type="GeneID" id="856907"/>
<dbReference type="KEGG" id="sce:YDR316W-A"/>
<dbReference type="KEGG" id="sce:YER159C-A"/>
<dbReference type="KEGG" id="sce:YGR161C-C"/>
<dbReference type="KEGG" id="sce:YMR051C"/>
<dbReference type="AGR" id="SGD:S000007403"/>
<dbReference type="SGD" id="S000007403">
    <property type="gene designation" value="YER159C-A"/>
</dbReference>
<dbReference type="VEuPathDB" id="FungiDB:YDR316W-A"/>
<dbReference type="VEuPathDB" id="FungiDB:YER159C-A"/>
<dbReference type="VEuPathDB" id="FungiDB:YGR161C-C"/>
<dbReference type="VEuPathDB" id="FungiDB:YMR051C"/>
<dbReference type="HOGENOM" id="CLU_045291_1_0_1"/>
<dbReference type="InParanoid" id="P0CX66"/>
<dbReference type="OrthoDB" id="4046078at2759"/>
<dbReference type="Proteomes" id="UP000002311">
    <property type="component" value="Chromosome V"/>
</dbReference>
<dbReference type="RNAct" id="P0CX66">
    <property type="molecule type" value="protein"/>
</dbReference>
<dbReference type="GO" id="GO:0005737">
    <property type="term" value="C:cytoplasm"/>
    <property type="evidence" value="ECO:0007669"/>
    <property type="project" value="UniProtKB-SubCell"/>
</dbReference>
<dbReference type="GO" id="GO:0003723">
    <property type="term" value="F:RNA binding"/>
    <property type="evidence" value="ECO:0007669"/>
    <property type="project" value="UniProtKB-KW"/>
</dbReference>
<dbReference type="GO" id="GO:0075523">
    <property type="term" value="P:viral translational frameshifting"/>
    <property type="evidence" value="ECO:0007669"/>
    <property type="project" value="UniProtKB-KW"/>
</dbReference>
<dbReference type="InterPro" id="IPR015820">
    <property type="entry name" value="TYA"/>
</dbReference>
<dbReference type="Pfam" id="PF01021">
    <property type="entry name" value="TYA"/>
    <property type="match status" value="1"/>
</dbReference>
<keyword id="KW-0963">Cytoplasm</keyword>
<keyword id="KW-0597">Phosphoprotein</keyword>
<keyword id="KW-1185">Reference proteome</keyword>
<keyword id="KW-0688">Ribosomal frameshifting</keyword>
<keyword id="KW-0694">RNA-binding</keyword>
<keyword id="KW-0814">Transposable element</keyword>
<organism>
    <name type="scientific">Saccharomyces cerevisiae (strain ATCC 204508 / S288c)</name>
    <name type="common">Baker's yeast</name>
    <dbReference type="NCBI Taxonomy" id="559292"/>
    <lineage>
        <taxon>Eukaryota</taxon>
        <taxon>Fungi</taxon>
        <taxon>Dikarya</taxon>
        <taxon>Ascomycota</taxon>
        <taxon>Saccharomycotina</taxon>
        <taxon>Saccharomycetes</taxon>
        <taxon>Saccharomycetales</taxon>
        <taxon>Saccharomycetaceae</taxon>
        <taxon>Saccharomyces</taxon>
    </lineage>
</organism>
<gene>
    <name type="primary">TY1A-ER2</name>
    <name type="synonym">YERCTy1-2 GAG</name>
    <name type="ordered locus">YER159C-A</name>
    <name type="ORF">YER160C-A</name>
</gene>
<sequence>MESQQLSNYPHISHGSACASVTSKEVHTNQDPLDVSASKIQEYDKASTKANSQQTTTPASSAVPENPHHASPQPASVPPPQNGPYPQQCMMTQNQANPSGWSFYGHPSMIPYTPYQMSPMYFPPGPQSQFPQYPSSVGTPLSTPSPESGNTFTDSSSADSDMTSTKKYVRPPPMLTSPNDFPNWVKTYIKFLQNSNLGGIIPTVNGKPVRQITDDELTFLYNTFQIFAPSQFLPTWVKDILSVDYTDIMKILSKSIEKMQSDTQEANDIVTLANLQYNGSTPADAFETKVTNIIDRLNNNGIHINNKVACQLIMRGLSGEYKFLRYTRHRHLNMTVAELFLDIHAIYEEQQGSRNSKPNYRRNPSDEKNDSRSYTNTTKPKVIARNPQKTNNSKSKTARAHNVSTSNNSPSTDNDSISKSTTEPIQLNNKHDLHLRPETY</sequence>
<name>YE12A_YEAST</name>
<accession>P0CX66</accession>
<accession>D3DM68</accession>
<accession>Q12231</accession>